<protein>
    <recommendedName>
        <fullName evidence="9">NADH-cytochrome b5 reductase 3</fullName>
        <shortName>B5R</shortName>
        <shortName>Cytochrome b5 reductase</shortName>
        <ecNumber evidence="6">1.6.2.2</ecNumber>
    </recommendedName>
    <alternativeName>
        <fullName>Diaphorase-1</fullName>
    </alternativeName>
</protein>
<dbReference type="EC" id="1.6.2.2" evidence="6"/>
<dbReference type="EMBL" id="BC146232">
    <property type="protein sequence ID" value="AAI46233.1"/>
    <property type="molecule type" value="mRNA"/>
</dbReference>
<dbReference type="EMBL" id="M83104">
    <property type="protein sequence ID" value="AAA30483.1"/>
    <property type="molecule type" value="mRNA"/>
</dbReference>
<dbReference type="PIR" id="A42328">
    <property type="entry name" value="RDBOB5"/>
</dbReference>
<dbReference type="RefSeq" id="NP_001096720.1">
    <property type="nucleotide sequence ID" value="NM_001103250.1"/>
</dbReference>
<dbReference type="SMR" id="P07514"/>
<dbReference type="FunCoup" id="P07514">
    <property type="interactions" value="2774"/>
</dbReference>
<dbReference type="STRING" id="9913.ENSBTAP00000060914"/>
<dbReference type="iPTMnet" id="P07514"/>
<dbReference type="PaxDb" id="9913-ENSBTAP00000040254"/>
<dbReference type="PeptideAtlas" id="P07514"/>
<dbReference type="GeneID" id="515773"/>
<dbReference type="KEGG" id="bta:515773"/>
<dbReference type="CTD" id="1727"/>
<dbReference type="VEuPathDB" id="HostDB:ENSBTAG00000016516"/>
<dbReference type="eggNOG" id="KOG0534">
    <property type="taxonomic scope" value="Eukaryota"/>
</dbReference>
<dbReference type="InParanoid" id="P07514"/>
<dbReference type="OMA" id="KGPEMQK"/>
<dbReference type="OrthoDB" id="432685at2759"/>
<dbReference type="BRENDA" id="1.6.2.2">
    <property type="organism ID" value="908"/>
</dbReference>
<dbReference type="Reactome" id="R-BTA-196836">
    <property type="pathway name" value="Vitamin C (ascorbate) metabolism"/>
</dbReference>
<dbReference type="Reactome" id="R-BTA-211945">
    <property type="pathway name" value="Phase I - Functionalization of compounds"/>
</dbReference>
<dbReference type="Reactome" id="R-BTA-6798695">
    <property type="pathway name" value="Neutrophil degranulation"/>
</dbReference>
<dbReference type="SABIO-RK" id="P07514"/>
<dbReference type="Proteomes" id="UP000009136">
    <property type="component" value="Chromosome 5"/>
</dbReference>
<dbReference type="Bgee" id="ENSBTAG00000016516">
    <property type="expression patterns" value="Expressed in subcutaneous adipose tissue and 109 other cell types or tissues"/>
</dbReference>
<dbReference type="GO" id="GO:0005789">
    <property type="term" value="C:endoplasmic reticulum membrane"/>
    <property type="evidence" value="ECO:0000250"/>
    <property type="project" value="UniProtKB"/>
</dbReference>
<dbReference type="GO" id="GO:0005741">
    <property type="term" value="C:mitochondrial outer membrane"/>
    <property type="evidence" value="ECO:0000250"/>
    <property type="project" value="UniProtKB"/>
</dbReference>
<dbReference type="GO" id="GO:0005739">
    <property type="term" value="C:mitochondrion"/>
    <property type="evidence" value="ECO:0000318"/>
    <property type="project" value="GO_Central"/>
</dbReference>
<dbReference type="GO" id="GO:0004128">
    <property type="term" value="F:cytochrome-b5 reductase activity, acting on NAD(P)H"/>
    <property type="evidence" value="ECO:0000315"/>
    <property type="project" value="UniProtKB"/>
</dbReference>
<dbReference type="GO" id="GO:0071949">
    <property type="term" value="F:FAD binding"/>
    <property type="evidence" value="ECO:0000250"/>
    <property type="project" value="UniProtKB"/>
</dbReference>
<dbReference type="GO" id="GO:0006695">
    <property type="term" value="P:cholesterol biosynthetic process"/>
    <property type="evidence" value="ECO:0007669"/>
    <property type="project" value="UniProtKB-KW"/>
</dbReference>
<dbReference type="CDD" id="cd06183">
    <property type="entry name" value="cyt_b5_reduct_like"/>
    <property type="match status" value="1"/>
</dbReference>
<dbReference type="FunFam" id="2.40.30.10:FF:000021">
    <property type="entry name" value="NADH-cytochrome b5 reductase"/>
    <property type="match status" value="1"/>
</dbReference>
<dbReference type="FunFam" id="3.40.50.80:FF:000005">
    <property type="entry name" value="NADH-cytochrome b5 reductase"/>
    <property type="match status" value="1"/>
</dbReference>
<dbReference type="Gene3D" id="3.40.50.80">
    <property type="entry name" value="Nucleotide-binding domain of ferredoxin-NADP reductase (FNR) module"/>
    <property type="match status" value="1"/>
</dbReference>
<dbReference type="Gene3D" id="2.40.30.10">
    <property type="entry name" value="Translation factors"/>
    <property type="match status" value="1"/>
</dbReference>
<dbReference type="InterPro" id="IPR001834">
    <property type="entry name" value="CBR-like"/>
</dbReference>
<dbReference type="InterPro" id="IPR008333">
    <property type="entry name" value="Cbr1-like_FAD-bd_dom"/>
</dbReference>
<dbReference type="InterPro" id="IPR017927">
    <property type="entry name" value="FAD-bd_FR_type"/>
</dbReference>
<dbReference type="InterPro" id="IPR001709">
    <property type="entry name" value="Flavoprot_Pyr_Nucl_cyt_Rdtase"/>
</dbReference>
<dbReference type="InterPro" id="IPR039261">
    <property type="entry name" value="FNR_nucleotide-bd"/>
</dbReference>
<dbReference type="InterPro" id="IPR001433">
    <property type="entry name" value="OxRdtase_FAD/NAD-bd"/>
</dbReference>
<dbReference type="InterPro" id="IPR017938">
    <property type="entry name" value="Riboflavin_synthase-like_b-brl"/>
</dbReference>
<dbReference type="PANTHER" id="PTHR19370">
    <property type="entry name" value="NADH-CYTOCHROME B5 REDUCTASE"/>
    <property type="match status" value="1"/>
</dbReference>
<dbReference type="PANTHER" id="PTHR19370:SF121">
    <property type="entry name" value="NADH-CYTOCHROME B5 REDUCTASE 3"/>
    <property type="match status" value="1"/>
</dbReference>
<dbReference type="Pfam" id="PF00970">
    <property type="entry name" value="FAD_binding_6"/>
    <property type="match status" value="1"/>
</dbReference>
<dbReference type="Pfam" id="PF00175">
    <property type="entry name" value="NAD_binding_1"/>
    <property type="match status" value="1"/>
</dbReference>
<dbReference type="PRINTS" id="PR00406">
    <property type="entry name" value="CYTB5RDTASE"/>
</dbReference>
<dbReference type="PRINTS" id="PR00371">
    <property type="entry name" value="FPNCR"/>
</dbReference>
<dbReference type="SUPFAM" id="SSF52343">
    <property type="entry name" value="Ferredoxin reductase-like, C-terminal NADP-linked domain"/>
    <property type="match status" value="1"/>
</dbReference>
<dbReference type="SUPFAM" id="SSF63380">
    <property type="entry name" value="Riboflavin synthase domain-like"/>
    <property type="match status" value="1"/>
</dbReference>
<dbReference type="PROSITE" id="PS51384">
    <property type="entry name" value="FAD_FR"/>
    <property type="match status" value="1"/>
</dbReference>
<name>NB5R3_BOVIN</name>
<comment type="function">
    <text evidence="6">Catalyzes the reduction of two molecules of cytochrome b5 using NADH as the electron donor.</text>
</comment>
<comment type="catalytic activity">
    <reaction evidence="6">
        <text>2 Fe(III)-[cytochrome b5] + NADH = 2 Fe(II)-[cytochrome b5] + NAD(+) + H(+)</text>
        <dbReference type="Rhea" id="RHEA:46680"/>
        <dbReference type="Rhea" id="RHEA-COMP:10438"/>
        <dbReference type="Rhea" id="RHEA-COMP:10439"/>
        <dbReference type="ChEBI" id="CHEBI:15378"/>
        <dbReference type="ChEBI" id="CHEBI:29033"/>
        <dbReference type="ChEBI" id="CHEBI:29034"/>
        <dbReference type="ChEBI" id="CHEBI:57540"/>
        <dbReference type="ChEBI" id="CHEBI:57945"/>
        <dbReference type="EC" id="1.6.2.2"/>
    </reaction>
    <physiologicalReaction direction="left-to-right" evidence="10">
        <dbReference type="Rhea" id="RHEA:46681"/>
    </physiologicalReaction>
</comment>
<comment type="cofactor">
    <cofactor evidence="1">
        <name>FAD</name>
        <dbReference type="ChEBI" id="CHEBI:57692"/>
    </cofactor>
</comment>
<comment type="subunit">
    <text evidence="3 4">Component of a complex composed of cytochrome b5, NADH-cytochrome b5 reductase (CYB5R3) and MTARC2 (By similarity). Interacts with MTLN; the interaction is required to maintain cellular lipid composition and leads to stimulation of mitochondrial respiratory complex I activity (By similarity).</text>
</comment>
<comment type="subcellular location">
    <subcellularLocation>
        <location evidence="2">Endoplasmic reticulum membrane</location>
        <topology evidence="2">Lipid-anchor</topology>
        <orientation evidence="2">Cytoplasmic side</orientation>
    </subcellularLocation>
    <subcellularLocation>
        <location evidence="2">Mitochondrion outer membrane</location>
        <topology evidence="2">Lipid-anchor</topology>
        <orientation evidence="2">Cytoplasmic side</orientation>
    </subcellularLocation>
</comment>
<comment type="similarity">
    <text evidence="9">Belongs to the flavoprotein pyridine nucleotide cytochrome reductase family.</text>
</comment>
<sequence>MGAQLSTLGHVVLSPVWFLYSLIMKLFQRSTPAITLENPDIKYPLRLIDKEVISHDTRRFRFALPSPEHILGLPVGQHIYLSARIDGNLVIRPYTPVSSDDDKGFVDLVIKVYFKDTHPKFPAGGKMSQYLESMKIGDTIEFRGPNGLLVYQGKGKFAIRPDKKSDPVIKTVKSVGMIAGGTGITPMLQVIRAIMKDPDDHTVCHLLFANQTEKDILLRPELEELRNEHSARFKLWYTVDKAPEAWDYSQGFVNEEMIRDHLPPPEEEPLVLMCGPPPMIQYACLPNLDRVGHPKERCFAF</sequence>
<reference key="1">
    <citation type="submission" date="2007-06" db="EMBL/GenBank/DDBJ databases">
        <authorList>
            <consortium name="NIH - Mammalian Gene Collection (MGC) project"/>
        </authorList>
    </citation>
    <scope>NUCLEOTIDE SEQUENCE [LARGE SCALE MRNA]</scope>
    <source>
        <strain>Hereford</strain>
        <tissue>Ascending colon</tissue>
    </source>
</reference>
<reference key="2">
    <citation type="journal article" date="1985" name="J. Biol. Chem.">
        <title>Complete amino acid sequence of steer liver microsomal NADH-cytochrome b5 reductase.</title>
        <authorList>
            <person name="Ozols J."/>
            <person name="Korza G."/>
            <person name="Heinemann F.S."/>
            <person name="Hediger M.A."/>
            <person name="Strittmatter P."/>
        </authorList>
    </citation>
    <scope>PROTEIN SEQUENCE OF 2-301</scope>
    <source>
        <strain>Black Angus</strain>
        <tissue>Liver</tissue>
    </source>
</reference>
<reference key="3">
    <citation type="journal article" date="1992" name="J. Biol. Chem.">
        <title>Characterization of lysyl residues of NADH-cytochrome b5 reductase implicated in charge-pairing with active-site carboxyl residues of cytochrome b5 by site-directed mutagenesis of an expression vector for the flavoprotein.</title>
        <authorList>
            <person name="Strittmatter P."/>
            <person name="Kittler J.M."/>
            <person name="Coghill J.E."/>
            <person name="Ozols J."/>
        </authorList>
    </citation>
    <scope>NUCLEOTIDE SEQUENCE [MRNA] OF 2-301</scope>
    <scope>MUTAGENESIS OF LYS-42; LYS-126 AND LYS-164</scope>
    <scope>FUNCTION</scope>
    <scope>CATALYTIC ACTIVITY</scope>
</reference>
<reference key="4">
    <citation type="journal article" date="1987" name="J. Biochem.">
        <title>Structural comparison of bovine erythrocyte, brain, and liver NADH-cytochrome b5 reductase by HPLC mapping.</title>
        <authorList>
            <person name="Tamura M."/>
            <person name="Yubisui T."/>
            <person name="Takeshita M."/>
            <person name="Kawabata S."/>
            <person name="Miyata T."/>
            <person name="Iwanaga S."/>
        </authorList>
    </citation>
    <scope>PROTEIN SEQUENCE OF 27-53</scope>
</reference>
<reference key="5">
    <citation type="journal article" date="1984" name="J. Biol. Chem.">
        <title>Identification of the NH2-terminal blocking group of NADH-cytochrome b5 reductase as myristic acid and the complete amino acid sequence of the membrane-binding domain.</title>
        <authorList>
            <person name="Ozols J."/>
            <person name="Carr S.A."/>
            <person name="Strittmatter P."/>
        </authorList>
    </citation>
    <scope>PROTEIN SEQUENCE OF 2-37</scope>
    <scope>MYRISTOYLATION AT GLY-2</scope>
</reference>
<reference key="6">
    <citation type="journal article" date="1983" name="J. Biol. Chem.">
        <title>Isolation and partial characterization of the NH2-terminal membrane-binding domain of NADH-cytochrome b5 reductase.</title>
        <authorList>
            <person name="Kensil C.R."/>
            <person name="Hediger M.A."/>
            <person name="Ozols J."/>
            <person name="Strittmatter P."/>
        </authorList>
    </citation>
    <scope>PROTEIN SEQUENCE OF 17-44</scope>
</reference>
<proteinExistence type="evidence at protein level"/>
<keyword id="KW-0007">Acetylation</keyword>
<keyword id="KW-0152">Cholesterol biosynthesis</keyword>
<keyword id="KW-0153">Cholesterol metabolism</keyword>
<keyword id="KW-0903">Direct protein sequencing</keyword>
<keyword id="KW-0256">Endoplasmic reticulum</keyword>
<keyword id="KW-0274">FAD</keyword>
<keyword id="KW-0285">Flavoprotein</keyword>
<keyword id="KW-0444">Lipid biosynthesis</keyword>
<keyword id="KW-0443">Lipid metabolism</keyword>
<keyword id="KW-0449">Lipoprotein</keyword>
<keyword id="KW-0472">Membrane</keyword>
<keyword id="KW-0496">Mitochondrion</keyword>
<keyword id="KW-1000">Mitochondrion outer membrane</keyword>
<keyword id="KW-0519">Myristate</keyword>
<keyword id="KW-0520">NAD</keyword>
<keyword id="KW-0560">Oxidoreductase</keyword>
<keyword id="KW-0597">Phosphoprotein</keyword>
<keyword id="KW-1185">Reference proteome</keyword>
<keyword id="KW-0752">Steroid biosynthesis</keyword>
<keyword id="KW-0753">Steroid metabolism</keyword>
<keyword id="KW-0756">Sterol biosynthesis</keyword>
<keyword id="KW-1207">Sterol metabolism</keyword>
<feature type="initiator methionine" description="Removed" evidence="7 8">
    <location>
        <position position="1"/>
    </location>
</feature>
<feature type="chain" id="PRO_0000019389" description="NADH-cytochrome b5 reductase 3">
    <location>
        <begin position="2"/>
        <end position="301"/>
    </location>
</feature>
<feature type="domain" description="FAD-binding FR-type" evidence="5">
    <location>
        <begin position="40"/>
        <end position="152"/>
    </location>
</feature>
<feature type="binding site" evidence="1">
    <location>
        <position position="92"/>
    </location>
    <ligand>
        <name>FAD</name>
        <dbReference type="ChEBI" id="CHEBI:57692"/>
    </ligand>
</feature>
<feature type="binding site" evidence="1">
    <location>
        <position position="93"/>
    </location>
    <ligand>
        <name>FAD</name>
        <dbReference type="ChEBI" id="CHEBI:57692"/>
    </ligand>
</feature>
<feature type="binding site" evidence="1">
    <location>
        <position position="94"/>
    </location>
    <ligand>
        <name>FAD</name>
        <dbReference type="ChEBI" id="CHEBI:57692"/>
    </ligand>
</feature>
<feature type="binding site" evidence="1">
    <location>
        <position position="109"/>
    </location>
    <ligand>
        <name>FAD</name>
        <dbReference type="ChEBI" id="CHEBI:57692"/>
    </ligand>
</feature>
<feature type="binding site" evidence="1">
    <location>
        <position position="111"/>
    </location>
    <ligand>
        <name>FAD</name>
        <dbReference type="ChEBI" id="CHEBI:57692"/>
    </ligand>
</feature>
<feature type="binding site" evidence="1">
    <location>
        <position position="114"/>
    </location>
    <ligand>
        <name>FAD</name>
        <dbReference type="ChEBI" id="CHEBI:57692"/>
    </ligand>
</feature>
<feature type="binding site" evidence="1">
    <location>
        <position position="126"/>
    </location>
    <ligand>
        <name>FAD</name>
        <dbReference type="ChEBI" id="CHEBI:57692"/>
    </ligand>
</feature>
<feature type="binding site" evidence="1">
    <location>
        <position position="127"/>
    </location>
    <ligand>
        <name>FAD</name>
        <dbReference type="ChEBI" id="CHEBI:57692"/>
    </ligand>
</feature>
<feature type="binding site" evidence="1">
    <location>
        <position position="128"/>
    </location>
    <ligand>
        <name>FAD</name>
        <dbReference type="ChEBI" id="CHEBI:57692"/>
    </ligand>
</feature>
<feature type="binding site" evidence="1">
    <location>
        <position position="185"/>
    </location>
    <ligand>
        <name>FAD</name>
        <dbReference type="ChEBI" id="CHEBI:57692"/>
    </ligand>
</feature>
<feature type="modified residue" description="N6-acetyllysine" evidence="1">
    <location>
        <position position="42"/>
    </location>
</feature>
<feature type="modified residue" description="Phosphotyrosine" evidence="1">
    <location>
        <position position="43"/>
    </location>
</feature>
<feature type="modified residue" description="N6-acetyllysine" evidence="4">
    <location>
        <position position="50"/>
    </location>
</feature>
<feature type="modified residue" description="N6-acetyllysine" evidence="4">
    <location>
        <position position="120"/>
    </location>
</feature>
<feature type="lipid moiety-binding region" description="N-myristoyl glycine" evidence="8">
    <location>
        <position position="2"/>
    </location>
</feature>
<feature type="mutagenesis site" description="Decrease of activity." evidence="6">
    <original>K</original>
    <variation>E</variation>
    <location>
        <position position="42"/>
    </location>
</feature>
<feature type="mutagenesis site" description="Decrease of activity." evidence="6">
    <original>K</original>
    <variation>E</variation>
    <location>
        <position position="126"/>
    </location>
</feature>
<feature type="mutagenesis site" description="Decrease of activity." evidence="6">
    <original>K</original>
    <variation>E</variation>
    <location>
        <position position="164"/>
    </location>
</feature>
<feature type="sequence conflict" description="In Ref. 2; AA sequence and 5; AA sequence." evidence="9" ref="2 5">
    <original>V</original>
    <variation>L</variation>
    <location>
        <position position="16"/>
    </location>
</feature>
<feature type="sequence conflict" description="In Ref. 2; AA sequence." evidence="9" ref="2">
    <original>K</original>
    <variation>G</variation>
    <location>
        <position position="135"/>
    </location>
</feature>
<feature type="sequence conflict" description="In Ref. 2; AA sequence." evidence="9" ref="2">
    <original>K</original>
    <variation>S</variation>
    <location>
        <position position="163"/>
    </location>
</feature>
<feature type="sequence conflict" description="In Ref. 2; AA sequence." evidence="9" ref="2">
    <original>N</original>
    <variation>D</variation>
    <location>
        <position position="227"/>
    </location>
</feature>
<evidence type="ECO:0000250" key="1">
    <source>
        <dbReference type="UniProtKB" id="P00387"/>
    </source>
</evidence>
<evidence type="ECO:0000250" key="2">
    <source>
        <dbReference type="UniProtKB" id="P20070"/>
    </source>
</evidence>
<evidence type="ECO:0000250" key="3">
    <source>
        <dbReference type="UniProtKB" id="P83686"/>
    </source>
</evidence>
<evidence type="ECO:0000250" key="4">
    <source>
        <dbReference type="UniProtKB" id="Q9DCN2"/>
    </source>
</evidence>
<evidence type="ECO:0000255" key="5">
    <source>
        <dbReference type="PROSITE-ProRule" id="PRU00716"/>
    </source>
</evidence>
<evidence type="ECO:0000269" key="6">
    <source>
    </source>
</evidence>
<evidence type="ECO:0000269" key="7">
    <source>
    </source>
</evidence>
<evidence type="ECO:0000269" key="8">
    <source>
    </source>
</evidence>
<evidence type="ECO:0000305" key="9"/>
<evidence type="ECO:0000305" key="10">
    <source>
    </source>
</evidence>
<accession>P07514</accession>
<accession>A6H7G0</accession>
<gene>
    <name type="primary">CYB5R3</name>
    <name type="synonym">DIA1</name>
</gene>
<organism>
    <name type="scientific">Bos taurus</name>
    <name type="common">Bovine</name>
    <dbReference type="NCBI Taxonomy" id="9913"/>
    <lineage>
        <taxon>Eukaryota</taxon>
        <taxon>Metazoa</taxon>
        <taxon>Chordata</taxon>
        <taxon>Craniata</taxon>
        <taxon>Vertebrata</taxon>
        <taxon>Euteleostomi</taxon>
        <taxon>Mammalia</taxon>
        <taxon>Eutheria</taxon>
        <taxon>Laurasiatheria</taxon>
        <taxon>Artiodactyla</taxon>
        <taxon>Ruminantia</taxon>
        <taxon>Pecora</taxon>
        <taxon>Bovidae</taxon>
        <taxon>Bovinae</taxon>
        <taxon>Bos</taxon>
    </lineage>
</organism>